<dbReference type="EC" id="3.1.1.29" evidence="1"/>
<dbReference type="EMBL" id="L43967">
    <property type="protein sequence ID" value="AAC71301.1"/>
    <property type="molecule type" value="Genomic_DNA"/>
</dbReference>
<dbReference type="EMBL" id="U02185">
    <property type="protein sequence ID" value="AAD12470.1"/>
    <property type="molecule type" value="Genomic_DNA"/>
</dbReference>
<dbReference type="PIR" id="B64209">
    <property type="entry name" value="B64209"/>
</dbReference>
<dbReference type="RefSeq" id="WP_009885642.1">
    <property type="nucleotide sequence ID" value="NC_000908.2"/>
</dbReference>
<dbReference type="SMR" id="P47329"/>
<dbReference type="FunCoup" id="P47329">
    <property type="interactions" value="184"/>
</dbReference>
<dbReference type="STRING" id="243273.MG_083"/>
<dbReference type="GeneID" id="88282206"/>
<dbReference type="KEGG" id="mge:MG_083"/>
<dbReference type="eggNOG" id="COG0193">
    <property type="taxonomic scope" value="Bacteria"/>
</dbReference>
<dbReference type="HOGENOM" id="CLU_062456_4_1_14"/>
<dbReference type="InParanoid" id="P47329"/>
<dbReference type="OrthoDB" id="9800507at2"/>
<dbReference type="BioCyc" id="MGEN243273:G1GJ2-95-MONOMER"/>
<dbReference type="Proteomes" id="UP000000807">
    <property type="component" value="Chromosome"/>
</dbReference>
<dbReference type="GO" id="GO:0005737">
    <property type="term" value="C:cytoplasm"/>
    <property type="evidence" value="ECO:0007669"/>
    <property type="project" value="UniProtKB-SubCell"/>
</dbReference>
<dbReference type="GO" id="GO:0004045">
    <property type="term" value="F:peptidyl-tRNA hydrolase activity"/>
    <property type="evidence" value="ECO:0000318"/>
    <property type="project" value="GO_Central"/>
</dbReference>
<dbReference type="GO" id="GO:0000049">
    <property type="term" value="F:tRNA binding"/>
    <property type="evidence" value="ECO:0007669"/>
    <property type="project" value="UniProtKB-UniRule"/>
</dbReference>
<dbReference type="GO" id="GO:0006515">
    <property type="term" value="P:protein quality control for misfolded or incompletely synthesized proteins"/>
    <property type="evidence" value="ECO:0007669"/>
    <property type="project" value="UniProtKB-UniRule"/>
</dbReference>
<dbReference type="GO" id="GO:0072344">
    <property type="term" value="P:rescue of stalled ribosome"/>
    <property type="evidence" value="ECO:0007669"/>
    <property type="project" value="UniProtKB-UniRule"/>
</dbReference>
<dbReference type="CDD" id="cd00462">
    <property type="entry name" value="PTH"/>
    <property type="match status" value="1"/>
</dbReference>
<dbReference type="FunFam" id="3.40.50.1470:FF:000005">
    <property type="entry name" value="Peptidyl-tRNA hydrolase"/>
    <property type="match status" value="1"/>
</dbReference>
<dbReference type="Gene3D" id="3.40.50.1470">
    <property type="entry name" value="Peptidyl-tRNA hydrolase"/>
    <property type="match status" value="1"/>
</dbReference>
<dbReference type="HAMAP" id="MF_00083">
    <property type="entry name" value="Pept_tRNA_hydro_bact"/>
    <property type="match status" value="1"/>
</dbReference>
<dbReference type="InterPro" id="IPR001328">
    <property type="entry name" value="Pept_tRNA_hydro"/>
</dbReference>
<dbReference type="InterPro" id="IPR018171">
    <property type="entry name" value="Pept_tRNA_hydro_CS"/>
</dbReference>
<dbReference type="InterPro" id="IPR036416">
    <property type="entry name" value="Pept_tRNA_hydro_sf"/>
</dbReference>
<dbReference type="NCBIfam" id="TIGR00447">
    <property type="entry name" value="pth"/>
    <property type="match status" value="1"/>
</dbReference>
<dbReference type="PANTHER" id="PTHR17224">
    <property type="entry name" value="PEPTIDYL-TRNA HYDROLASE"/>
    <property type="match status" value="1"/>
</dbReference>
<dbReference type="PANTHER" id="PTHR17224:SF1">
    <property type="entry name" value="PEPTIDYL-TRNA HYDROLASE"/>
    <property type="match status" value="1"/>
</dbReference>
<dbReference type="Pfam" id="PF01195">
    <property type="entry name" value="Pept_tRNA_hydro"/>
    <property type="match status" value="1"/>
</dbReference>
<dbReference type="SUPFAM" id="SSF53178">
    <property type="entry name" value="Peptidyl-tRNA hydrolase-like"/>
    <property type="match status" value="1"/>
</dbReference>
<dbReference type="PROSITE" id="PS01195">
    <property type="entry name" value="PEPT_TRNA_HYDROL_1"/>
    <property type="match status" value="1"/>
</dbReference>
<dbReference type="PROSITE" id="PS01196">
    <property type="entry name" value="PEPT_TRNA_HYDROL_2"/>
    <property type="match status" value="1"/>
</dbReference>
<comment type="function">
    <text evidence="1">Hydrolyzes ribosome-free peptidyl-tRNAs (with 1 or more amino acids incorporated), which drop off the ribosome during protein synthesis, or as a result of ribosome stalling.</text>
</comment>
<comment type="function">
    <text evidence="1">Catalyzes the release of premature peptidyl moieties from peptidyl-tRNA molecules trapped in stalled 50S ribosomal subunits, and thus maintains levels of free tRNAs and 50S ribosomes.</text>
</comment>
<comment type="catalytic activity">
    <reaction evidence="1">
        <text>an N-acyl-L-alpha-aminoacyl-tRNA + H2O = an N-acyl-L-amino acid + a tRNA + H(+)</text>
        <dbReference type="Rhea" id="RHEA:54448"/>
        <dbReference type="Rhea" id="RHEA-COMP:10123"/>
        <dbReference type="Rhea" id="RHEA-COMP:13883"/>
        <dbReference type="ChEBI" id="CHEBI:15377"/>
        <dbReference type="ChEBI" id="CHEBI:15378"/>
        <dbReference type="ChEBI" id="CHEBI:59874"/>
        <dbReference type="ChEBI" id="CHEBI:78442"/>
        <dbReference type="ChEBI" id="CHEBI:138191"/>
        <dbReference type="EC" id="3.1.1.29"/>
    </reaction>
</comment>
<comment type="subunit">
    <text evidence="1">Monomer.</text>
</comment>
<comment type="subcellular location">
    <subcellularLocation>
        <location evidence="1">Cytoplasm</location>
    </subcellularLocation>
</comment>
<comment type="similarity">
    <text evidence="1">Belongs to the PTH family.</text>
</comment>
<protein>
    <recommendedName>
        <fullName evidence="1">Peptidyl-tRNA hydrolase</fullName>
        <shortName evidence="1">Pth</shortName>
        <ecNumber evidence="1">3.1.1.29</ecNumber>
    </recommendedName>
</protein>
<proteinExistence type="inferred from homology"/>
<organism>
    <name type="scientific">Mycoplasma genitalium (strain ATCC 33530 / DSM 19775 / NCTC 10195 / G37)</name>
    <name type="common">Mycoplasmoides genitalium</name>
    <dbReference type="NCBI Taxonomy" id="243273"/>
    <lineage>
        <taxon>Bacteria</taxon>
        <taxon>Bacillati</taxon>
        <taxon>Mycoplasmatota</taxon>
        <taxon>Mycoplasmoidales</taxon>
        <taxon>Mycoplasmoidaceae</taxon>
        <taxon>Mycoplasmoides</taxon>
    </lineage>
</organism>
<reference key="1">
    <citation type="journal article" date="1995" name="Science">
        <title>The minimal gene complement of Mycoplasma genitalium.</title>
        <authorList>
            <person name="Fraser C.M."/>
            <person name="Gocayne J.D."/>
            <person name="White O."/>
            <person name="Adams M.D."/>
            <person name="Clayton R.A."/>
            <person name="Fleischmann R.D."/>
            <person name="Bult C.J."/>
            <person name="Kerlavage A.R."/>
            <person name="Sutton G.G."/>
            <person name="Kelley J.M."/>
            <person name="Fritchman J.L."/>
            <person name="Weidman J.F."/>
            <person name="Small K.V."/>
            <person name="Sandusky M."/>
            <person name="Fuhrmann J.L."/>
            <person name="Nguyen D.T."/>
            <person name="Utterback T.R."/>
            <person name="Saudek D.M."/>
            <person name="Phillips C.A."/>
            <person name="Merrick J.M."/>
            <person name="Tomb J.-F."/>
            <person name="Dougherty B.A."/>
            <person name="Bott K.F."/>
            <person name="Hu P.-C."/>
            <person name="Lucier T.S."/>
            <person name="Peterson S.N."/>
            <person name="Smith H.O."/>
            <person name="Hutchison C.A. III"/>
            <person name="Venter J.C."/>
        </authorList>
    </citation>
    <scope>NUCLEOTIDE SEQUENCE [LARGE SCALE GENOMIC DNA]</scope>
    <source>
        <strain>ATCC 33530 / DSM 19775 / NCTC 10195 / G37</strain>
    </source>
</reference>
<reference key="2">
    <citation type="journal article" date="1993" name="J. Bacteriol.">
        <title>A survey of the Mycoplasma genitalium genome by using random sequencing.</title>
        <authorList>
            <person name="Peterson S.N."/>
            <person name="Hu P.-C."/>
            <person name="Bott K.F."/>
            <person name="Hutchison C.A. III"/>
        </authorList>
    </citation>
    <scope>NUCLEOTIDE SEQUENCE [GENOMIC DNA] OF 74-189</scope>
    <source>
        <strain>ATCC 33530 / DSM 19775 / NCTC 10195 / G37</strain>
    </source>
</reference>
<gene>
    <name evidence="1" type="primary">pth</name>
    <name type="ordered locus">MG083</name>
</gene>
<name>PTH_MYCGE</name>
<accession>P47329</accession>
<sequence length="189" mass="21833">MPTYKLIVGLGNLGKKYEKTRHNAGFMVLDRLASLFHLNFDKTNKLGDYLFIKEKAAILAKPATFMNNSGLFVKWLQDHFQIPLANIMIVHDEIAFDLGVIRLKMQGSANNHNGIKSVIRHLDTEQFNRLRFGIKSQNTSNILHEQVMSEFQNSELTKLEVAITKSVELLKRYIEGEELQRLMEYYHHG</sequence>
<keyword id="KW-0963">Cytoplasm</keyword>
<keyword id="KW-0378">Hydrolase</keyword>
<keyword id="KW-1185">Reference proteome</keyword>
<keyword id="KW-0694">RNA-binding</keyword>
<keyword id="KW-0820">tRNA-binding</keyword>
<evidence type="ECO:0000255" key="1">
    <source>
        <dbReference type="HAMAP-Rule" id="MF_00083"/>
    </source>
</evidence>
<feature type="chain" id="PRO_0000187771" description="Peptidyl-tRNA hydrolase">
    <location>
        <begin position="1"/>
        <end position="189"/>
    </location>
</feature>
<feature type="active site" description="Proton acceptor" evidence="1">
    <location>
        <position position="22"/>
    </location>
</feature>
<feature type="binding site" evidence="1">
    <location>
        <position position="17"/>
    </location>
    <ligand>
        <name>tRNA</name>
        <dbReference type="ChEBI" id="CHEBI:17843"/>
    </ligand>
</feature>
<feature type="binding site" evidence="1">
    <location>
        <position position="65"/>
    </location>
    <ligand>
        <name>tRNA</name>
        <dbReference type="ChEBI" id="CHEBI:17843"/>
    </ligand>
</feature>
<feature type="binding site" evidence="1">
    <location>
        <position position="67"/>
    </location>
    <ligand>
        <name>tRNA</name>
        <dbReference type="ChEBI" id="CHEBI:17843"/>
    </ligand>
</feature>
<feature type="binding site" evidence="1">
    <location>
        <position position="113"/>
    </location>
    <ligand>
        <name>tRNA</name>
        <dbReference type="ChEBI" id="CHEBI:17843"/>
    </ligand>
</feature>
<feature type="site" description="Discriminates between blocked and unblocked aminoacyl-tRNA" evidence="1">
    <location>
        <position position="12"/>
    </location>
</feature>
<feature type="site" description="Stabilizes the basic form of H active site to accept a proton" evidence="1">
    <location>
        <position position="92"/>
    </location>
</feature>